<protein>
    <recommendedName>
        <fullName>Ophiophagus venom factor</fullName>
        <shortName>OVF</shortName>
    </recommendedName>
    <alternativeName>
        <fullName>CVF-like</fullName>
    </alternativeName>
    <alternativeName>
        <fullName>Complement C3 homolog</fullName>
    </alternativeName>
    <component>
        <recommendedName>
            <fullName>OVF alpha chain</fullName>
        </recommendedName>
    </component>
    <component>
        <recommendedName>
            <fullName>OVF gamma chain</fullName>
        </recommendedName>
    </component>
    <component>
        <recommendedName>
            <fullName>OVF beta chain</fullName>
        </recommendedName>
    </component>
</protein>
<accession>I2C090</accession>
<proteinExistence type="evidence at protein level"/>
<name>VCO3_OPHHA</name>
<keyword id="KW-0165">Cleavage on pair of basic residues</keyword>
<keyword id="KW-1216">Complement system impairing toxin</keyword>
<keyword id="KW-0903">Direct protein sequencing</keyword>
<keyword id="KW-1015">Disulfide bond</keyword>
<keyword id="KW-0325">Glycoprotein</keyword>
<keyword id="KW-0460">Magnesium</keyword>
<keyword id="KW-0479">Metal-binding</keyword>
<keyword id="KW-0964">Secreted</keyword>
<keyword id="KW-0732">Signal</keyword>
<keyword id="KW-0882">Thioester bond</keyword>
<keyword id="KW-0800">Toxin</keyword>
<comment type="function">
    <text evidence="1 5">Complement-activating protein in cobra venom. It is a structural and functional analog of complement component C3b, the activated form of C3. It binds factor B (CFB), which is subsequently cleaved by factor D (CFD) to form the bimolecular complex OVF/Bb. OVF/Bb is a C3/C5 convertase that cleaves both complement components C3 and C5. Structurally, it resembles the C3b degradation product C3c, which is not able to form a C3/C5 convertase. Unlike C3b/Bb, OVF/Bb is a stable complex and completely resistant to the actions of complement regulatory factors H (CFH) and I (CFI). Therefore, OVF continuously activates complement (By similarity). As a result, OVF exhibits complement-depleting activity.</text>
</comment>
<comment type="subunit">
    <text>Heterotrimer of alpha, beta and gamma chains; disulfide-linked. May be active with factor B in the presence of factor D.</text>
</comment>
<comment type="subcellular location">
    <subcellularLocation>
        <location>Secreted</location>
    </subcellularLocation>
</comment>
<comment type="tissue specificity">
    <text>Expressed by the venom gland.</text>
</comment>
<comment type="PTM">
    <text evidence="1">First processed by the removal of 4 Arg residues by furin-type protease, forming two chains, alpha and gamma/beta precursor, linked by a disulfide bond. Probably, a cobrin-like protease cleaves the C3a-like domain and then the C3d-like domain, generating the mature venom factor (OVF) (By similarity).</text>
</comment>
<comment type="PTM">
    <text evidence="5">The beta chain is not glycosylated.</text>
</comment>
<comment type="similarity">
    <text evidence="6">Belongs to the venom complement C3 homolog family.</text>
</comment>
<reference key="1">
    <citation type="journal article" date="2012" name="Toxicon">
        <title>Molecular cloning and characterization of a complement-depleting factor from king cobra, Ophiophagus hannah.</title>
        <authorList>
            <person name="Zeng L."/>
            <person name="Sun Q.Y."/>
            <person name="Jin Y."/>
            <person name="Zhang Y."/>
            <person name="Lee W.H."/>
            <person name="Zhang Y."/>
        </authorList>
    </citation>
    <scope>NUCLEOTIDE SEQUENCE [MRNA]</scope>
    <scope>PROTEIN SEQUENCE OF 23-33; 729-733 AND 1260-1268</scope>
    <scope>FUNCTION</scope>
    <scope>IDENTIFICATION BY MASS SPECTROMETRY</scope>
    <source>
        <tissue>Venom</tissue>
        <tissue>Venom gland</tissue>
    </source>
</reference>
<reference key="2">
    <citation type="journal article" date="2013" name="Proc. Natl. Acad. Sci. U.S.A.">
        <title>The king cobra genome reveals dynamic gene evolution and adaptation in the snake venom system.</title>
        <authorList>
            <person name="Vonk F.J."/>
            <person name="Casewell N.R."/>
            <person name="Henkel C.V."/>
            <person name="Heimberg A.M."/>
            <person name="Jansen H.J."/>
            <person name="McCleary R.J."/>
            <person name="Kerkkamp H.M."/>
            <person name="Vos R.A."/>
            <person name="Guerreiro I."/>
            <person name="Calvete J.J."/>
            <person name="Wuster W."/>
            <person name="Woods A.E."/>
            <person name="Logan J.M."/>
            <person name="Harrison R.A."/>
            <person name="Castoe T.A."/>
            <person name="de Koning A.P."/>
            <person name="Pollock D.D."/>
            <person name="Yandell M."/>
            <person name="Calderon D."/>
            <person name="Renjifo C."/>
            <person name="Currier R.B."/>
            <person name="Salgado D."/>
            <person name="Pla D."/>
            <person name="Sanz L."/>
            <person name="Hyder A.S."/>
            <person name="Ribeiro J.M."/>
            <person name="Arntzen J.W."/>
            <person name="van den Thillart G.E."/>
            <person name="Boetzer M."/>
            <person name="Pirovano W."/>
            <person name="Dirks R.P."/>
            <person name="Spaink H.P."/>
            <person name="Duboule D."/>
            <person name="McGlinn E."/>
            <person name="Kini R.M."/>
            <person name="Richardson M.K."/>
        </authorList>
    </citation>
    <scope>IDENTIFICATION BY MASS SPECTROMETRY</scope>
    <source>
        <tissue>Venom</tissue>
    </source>
</reference>
<evidence type="ECO:0000250" key="1"/>
<evidence type="ECO:0000255" key="2"/>
<evidence type="ECO:0000255" key="3">
    <source>
        <dbReference type="PROSITE-ProRule" id="PRU00022"/>
    </source>
</evidence>
<evidence type="ECO:0000255" key="4">
    <source>
        <dbReference type="PROSITE-ProRule" id="PRU00295"/>
    </source>
</evidence>
<evidence type="ECO:0000269" key="5">
    <source>
    </source>
</evidence>
<evidence type="ECO:0000305" key="6"/>
<feature type="signal peptide" evidence="5">
    <location>
        <begin position="1"/>
        <end position="22"/>
    </location>
</feature>
<feature type="chain" id="PRO_0000423454" description="Ophiophagus venom factor">
    <location>
        <begin position="23"/>
        <end position="1641"/>
    </location>
</feature>
<feature type="chain" id="PRO_0000423455" description="OVF alpha chain">
    <location>
        <begin position="23"/>
        <end position="644"/>
    </location>
</feature>
<feature type="propeptide" id="PRO_0000423456" evidence="5">
    <location>
        <begin position="645"/>
        <end position="728"/>
    </location>
</feature>
<feature type="chain" id="PRO_0000423457" description="OVF gamma chain">
    <location>
        <begin position="729"/>
        <end position="980"/>
    </location>
</feature>
<feature type="propeptide" id="PRO_0000423458" evidence="5">
    <location>
        <begin position="981"/>
        <end position="1259"/>
    </location>
</feature>
<feature type="chain" id="PRO_0000423459" description="OVF beta chain">
    <location>
        <begin position="1260"/>
        <end position="1641"/>
    </location>
</feature>
<feature type="domain" description="Anaphylatoxin-like" evidence="3">
    <location>
        <begin position="672"/>
        <end position="707"/>
    </location>
</feature>
<feature type="domain" description="NTR" evidence="4">
    <location>
        <begin position="1496"/>
        <end position="1639"/>
    </location>
</feature>
<feature type="region of interest" description="C3a-like domain" evidence="1">
    <location>
        <begin position="649"/>
        <end position="727"/>
    </location>
</feature>
<feature type="region of interest" description="Factor B binding site" evidence="1">
    <location>
        <begin position="731"/>
        <end position="742"/>
    </location>
</feature>
<feature type="region of interest" description="C3d-like domain" evidence="1">
    <location>
        <begin position="981"/>
        <end position="1259"/>
    </location>
</feature>
<feature type="region of interest" description="Factor H binding site" evidence="1">
    <location>
        <begin position="1186"/>
        <end position="1249"/>
    </location>
</feature>
<feature type="binding site" evidence="1">
    <location>
        <position position="507"/>
    </location>
    <ligand>
        <name>Mg(2+)</name>
        <dbReference type="ChEBI" id="CHEBI:18420"/>
    </ligand>
</feature>
<feature type="binding site" evidence="1">
    <location>
        <position position="530"/>
    </location>
    <ligand>
        <name>Mg(2+)</name>
        <dbReference type="ChEBI" id="CHEBI:18420"/>
    </ligand>
</feature>
<feature type="binding site" evidence="1">
    <location>
        <position position="531"/>
    </location>
    <ligand>
        <name>Mg(2+)</name>
        <dbReference type="ChEBI" id="CHEBI:18420"/>
    </ligand>
</feature>
<feature type="binding site" evidence="1">
    <location>
        <position position="533"/>
    </location>
    <ligand>
        <name>Mg(2+)</name>
        <dbReference type="ChEBI" id="CHEBI:18420"/>
    </ligand>
</feature>
<feature type="glycosylation site" description="N-linked (GlcNAc...) asparagine" evidence="2">
    <location>
        <position position="181"/>
    </location>
</feature>
<feature type="glycosylation site" description="N-linked (GlcNAc...) asparagine" evidence="2">
    <location>
        <position position="209"/>
    </location>
</feature>
<feature type="disulfide bond" description="Interchain (between alpha and gamma chains)" evidence="3 4">
    <location>
        <begin position="535"/>
        <end position="796"/>
    </location>
</feature>
<feature type="disulfide bond" evidence="1">
    <location>
        <begin position="604"/>
        <end position="639"/>
    </location>
</feature>
<feature type="disulfide bond" evidence="1">
    <location>
        <begin position="672"/>
        <end position="699"/>
    </location>
</feature>
<feature type="disulfide bond" evidence="1">
    <location>
        <begin position="673"/>
        <end position="706"/>
    </location>
</feature>
<feature type="disulfide bond" evidence="1">
    <location>
        <begin position="686"/>
        <end position="707"/>
    </location>
</feature>
<feature type="disulfide bond" description="Interchain (between gamma and beta chains)" evidence="3 4">
    <location>
        <begin position="852"/>
        <end position="1491"/>
    </location>
</feature>
<feature type="disulfide bond" evidence="1">
    <location>
        <begin position="1336"/>
        <end position="1467"/>
    </location>
</feature>
<feature type="disulfide bond" evidence="1">
    <location>
        <begin position="1367"/>
        <end position="1436"/>
    </location>
</feature>
<feature type="disulfide bond" evidence="1">
    <location>
        <begin position="1484"/>
        <end position="1489"/>
    </location>
</feature>
<feature type="disulfide bond" evidence="1">
    <location>
        <begin position="1496"/>
        <end position="1568"/>
    </location>
</feature>
<feature type="disulfide bond" evidence="1">
    <location>
        <begin position="1515"/>
        <end position="1639"/>
    </location>
</feature>
<feature type="disulfide bond" evidence="1">
    <location>
        <begin position="1615"/>
        <end position="1624"/>
    </location>
</feature>
<feature type="cross-link" description="Isoglutamyl cysteine thioester (Cys-Gln)" evidence="1">
    <location>
        <begin position="989"/>
        <end position="992"/>
    </location>
</feature>
<organism>
    <name type="scientific">Ophiophagus hannah</name>
    <name type="common">King cobra</name>
    <name type="synonym">Naja hannah</name>
    <dbReference type="NCBI Taxonomy" id="8665"/>
    <lineage>
        <taxon>Eukaryota</taxon>
        <taxon>Metazoa</taxon>
        <taxon>Chordata</taxon>
        <taxon>Craniata</taxon>
        <taxon>Vertebrata</taxon>
        <taxon>Euteleostomi</taxon>
        <taxon>Lepidosauria</taxon>
        <taxon>Squamata</taxon>
        <taxon>Bifurcata</taxon>
        <taxon>Unidentata</taxon>
        <taxon>Episquamata</taxon>
        <taxon>Toxicofera</taxon>
        <taxon>Serpentes</taxon>
        <taxon>Colubroidea</taxon>
        <taxon>Elapidae</taxon>
        <taxon>Elapinae</taxon>
        <taxon>Ophiophagus</taxon>
    </lineage>
</organism>
<dbReference type="EMBL" id="JQ418342">
    <property type="protein sequence ID" value="AFJ59923.1"/>
    <property type="molecule type" value="mRNA"/>
</dbReference>
<dbReference type="SMR" id="I2C090"/>
<dbReference type="MEROPS" id="I39.950"/>
<dbReference type="GO" id="GO:0005615">
    <property type="term" value="C:extracellular space"/>
    <property type="evidence" value="ECO:0007669"/>
    <property type="project" value="InterPro"/>
</dbReference>
<dbReference type="GO" id="GO:0004866">
    <property type="term" value="F:endopeptidase inhibitor activity"/>
    <property type="evidence" value="ECO:0007669"/>
    <property type="project" value="InterPro"/>
</dbReference>
<dbReference type="GO" id="GO:0046872">
    <property type="term" value="F:metal ion binding"/>
    <property type="evidence" value="ECO:0007669"/>
    <property type="project" value="UniProtKB-KW"/>
</dbReference>
<dbReference type="GO" id="GO:0090729">
    <property type="term" value="F:toxin activity"/>
    <property type="evidence" value="ECO:0007669"/>
    <property type="project" value="UniProtKB-KW"/>
</dbReference>
<dbReference type="GO" id="GO:0006956">
    <property type="term" value="P:complement activation"/>
    <property type="evidence" value="ECO:0007669"/>
    <property type="project" value="InterPro"/>
</dbReference>
<dbReference type="GO" id="GO:0006954">
    <property type="term" value="P:inflammatory response"/>
    <property type="evidence" value="ECO:0007669"/>
    <property type="project" value="InterPro"/>
</dbReference>
<dbReference type="CDD" id="cd00017">
    <property type="entry name" value="ANATO"/>
    <property type="match status" value="1"/>
</dbReference>
<dbReference type="CDD" id="cd02896">
    <property type="entry name" value="complement_C3_C4_C5"/>
    <property type="match status" value="1"/>
</dbReference>
<dbReference type="CDD" id="cd03583">
    <property type="entry name" value="NTR_complement_C3"/>
    <property type="match status" value="1"/>
</dbReference>
<dbReference type="FunFam" id="2.20.130.20:FF:000001">
    <property type="entry name" value="Complement C3"/>
    <property type="match status" value="1"/>
</dbReference>
<dbReference type="FunFam" id="2.40.50.120:FF:000013">
    <property type="entry name" value="Complement C3"/>
    <property type="match status" value="1"/>
</dbReference>
<dbReference type="FunFam" id="2.60.40.10:FF:001013">
    <property type="entry name" value="Complement C3"/>
    <property type="match status" value="1"/>
</dbReference>
<dbReference type="FunFam" id="2.60.40.10:FF:000155">
    <property type="entry name" value="complement C3 isoform X1"/>
    <property type="match status" value="1"/>
</dbReference>
<dbReference type="FunFam" id="2.60.40.1940:FF:000001">
    <property type="entry name" value="Complement component C3"/>
    <property type="match status" value="1"/>
</dbReference>
<dbReference type="Gene3D" id="1.50.10.20">
    <property type="match status" value="1"/>
</dbReference>
<dbReference type="Gene3D" id="2.20.130.20">
    <property type="match status" value="1"/>
</dbReference>
<dbReference type="Gene3D" id="2.40.50.120">
    <property type="match status" value="1"/>
</dbReference>
<dbReference type="Gene3D" id="2.60.120.1540">
    <property type="match status" value="1"/>
</dbReference>
<dbReference type="Gene3D" id="2.60.40.1930">
    <property type="match status" value="3"/>
</dbReference>
<dbReference type="Gene3D" id="2.60.40.1940">
    <property type="match status" value="1"/>
</dbReference>
<dbReference type="Gene3D" id="6.20.50.160">
    <property type="match status" value="1"/>
</dbReference>
<dbReference type="Gene3D" id="2.60.40.690">
    <property type="entry name" value="Alpha-macroglobulin, receptor-binding domain"/>
    <property type="match status" value="1"/>
</dbReference>
<dbReference type="Gene3D" id="1.20.91.20">
    <property type="entry name" value="Anaphylotoxins (complement system)"/>
    <property type="match status" value="1"/>
</dbReference>
<dbReference type="Gene3D" id="2.60.40.10">
    <property type="entry name" value="Immunoglobulins"/>
    <property type="match status" value="2"/>
</dbReference>
<dbReference type="InterPro" id="IPR009048">
    <property type="entry name" value="A-macroglobulin_rcpt-bd"/>
</dbReference>
<dbReference type="InterPro" id="IPR036595">
    <property type="entry name" value="A-macroglobulin_rcpt-bd_sf"/>
</dbReference>
<dbReference type="InterPro" id="IPR050473">
    <property type="entry name" value="A2M/Complement_sys"/>
</dbReference>
<dbReference type="InterPro" id="IPR011625">
    <property type="entry name" value="A2M_N_BRD"/>
</dbReference>
<dbReference type="InterPro" id="IPR047565">
    <property type="entry name" value="Alpha-macroglob_thiol-ester_cl"/>
</dbReference>
<dbReference type="InterPro" id="IPR011626">
    <property type="entry name" value="Alpha-macroglobulin_TED"/>
</dbReference>
<dbReference type="InterPro" id="IPR000020">
    <property type="entry name" value="Anaphylatoxin/fibulin"/>
</dbReference>
<dbReference type="InterPro" id="IPR018081">
    <property type="entry name" value="Anaphylatoxin_comp_syst"/>
</dbReference>
<dbReference type="InterPro" id="IPR001840">
    <property type="entry name" value="Anaphylatoxn_comp_syst_dom"/>
</dbReference>
<dbReference type="InterPro" id="IPR041425">
    <property type="entry name" value="C3/4/5_MG1"/>
</dbReference>
<dbReference type="InterPro" id="IPR049466">
    <property type="entry name" value="C3_CUB1"/>
</dbReference>
<dbReference type="InterPro" id="IPR048848">
    <property type="entry name" value="C3_CUB2"/>
</dbReference>
<dbReference type="InterPro" id="IPR013783">
    <property type="entry name" value="Ig-like_fold"/>
</dbReference>
<dbReference type="InterPro" id="IPR001599">
    <property type="entry name" value="Macroglobln_a2"/>
</dbReference>
<dbReference type="InterPro" id="IPR019742">
    <property type="entry name" value="MacrogloblnA2_CS"/>
</dbReference>
<dbReference type="InterPro" id="IPR002890">
    <property type="entry name" value="MG2"/>
</dbReference>
<dbReference type="InterPro" id="IPR041555">
    <property type="entry name" value="MG3"/>
</dbReference>
<dbReference type="InterPro" id="IPR040839">
    <property type="entry name" value="MG4"/>
</dbReference>
<dbReference type="InterPro" id="IPR001134">
    <property type="entry name" value="Netrin_domain"/>
</dbReference>
<dbReference type="InterPro" id="IPR018933">
    <property type="entry name" value="Netrin_module_non-TIMP"/>
</dbReference>
<dbReference type="InterPro" id="IPR035815">
    <property type="entry name" value="NTR_complement_C3"/>
</dbReference>
<dbReference type="InterPro" id="IPR008930">
    <property type="entry name" value="Terpenoid_cyclase/PrenylTrfase"/>
</dbReference>
<dbReference type="InterPro" id="IPR008993">
    <property type="entry name" value="TIMP-like_OB-fold"/>
</dbReference>
<dbReference type="PANTHER" id="PTHR11412:SF81">
    <property type="entry name" value="COMPLEMENT C3"/>
    <property type="match status" value="1"/>
</dbReference>
<dbReference type="PANTHER" id="PTHR11412">
    <property type="entry name" value="MACROGLOBULIN / COMPLEMENT"/>
    <property type="match status" value="1"/>
</dbReference>
<dbReference type="Pfam" id="PF00207">
    <property type="entry name" value="A2M"/>
    <property type="match status" value="1"/>
</dbReference>
<dbReference type="Pfam" id="PF07703">
    <property type="entry name" value="A2M_BRD"/>
    <property type="match status" value="1"/>
</dbReference>
<dbReference type="Pfam" id="PF07677">
    <property type="entry name" value="A2M_recep"/>
    <property type="match status" value="1"/>
</dbReference>
<dbReference type="Pfam" id="PF01821">
    <property type="entry name" value="ANATO"/>
    <property type="match status" value="1"/>
</dbReference>
<dbReference type="Pfam" id="PF21406">
    <property type="entry name" value="C3_CUB1"/>
    <property type="match status" value="1"/>
</dbReference>
<dbReference type="Pfam" id="PF21308">
    <property type="entry name" value="C3_CUB2"/>
    <property type="match status" value="1"/>
</dbReference>
<dbReference type="Pfam" id="PF17790">
    <property type="entry name" value="MG1"/>
    <property type="match status" value="1"/>
</dbReference>
<dbReference type="Pfam" id="PF01835">
    <property type="entry name" value="MG2"/>
    <property type="match status" value="1"/>
</dbReference>
<dbReference type="Pfam" id="PF17791">
    <property type="entry name" value="MG3"/>
    <property type="match status" value="1"/>
</dbReference>
<dbReference type="Pfam" id="PF17789">
    <property type="entry name" value="MG4"/>
    <property type="match status" value="1"/>
</dbReference>
<dbReference type="Pfam" id="PF01759">
    <property type="entry name" value="NTR"/>
    <property type="match status" value="1"/>
</dbReference>
<dbReference type="Pfam" id="PF07678">
    <property type="entry name" value="TED_complement"/>
    <property type="match status" value="1"/>
</dbReference>
<dbReference type="PRINTS" id="PR00004">
    <property type="entry name" value="ANAPHYLATOXN"/>
</dbReference>
<dbReference type="SMART" id="SM01360">
    <property type="entry name" value="A2M"/>
    <property type="match status" value="1"/>
</dbReference>
<dbReference type="SMART" id="SM01359">
    <property type="entry name" value="A2M_N_2"/>
    <property type="match status" value="1"/>
</dbReference>
<dbReference type="SMART" id="SM01361">
    <property type="entry name" value="A2M_recep"/>
    <property type="match status" value="1"/>
</dbReference>
<dbReference type="SMART" id="SM00104">
    <property type="entry name" value="ANATO"/>
    <property type="match status" value="1"/>
</dbReference>
<dbReference type="SMART" id="SM00643">
    <property type="entry name" value="C345C"/>
    <property type="match status" value="1"/>
</dbReference>
<dbReference type="SMART" id="SM01419">
    <property type="entry name" value="Thiol-ester_cl"/>
    <property type="match status" value="1"/>
</dbReference>
<dbReference type="SUPFAM" id="SSF49410">
    <property type="entry name" value="Alpha-macroglobulin receptor domain"/>
    <property type="match status" value="1"/>
</dbReference>
<dbReference type="SUPFAM" id="SSF47686">
    <property type="entry name" value="Anaphylotoxins (complement system)"/>
    <property type="match status" value="1"/>
</dbReference>
<dbReference type="SUPFAM" id="SSF48239">
    <property type="entry name" value="Terpenoid cyclases/Protein prenyltransferases"/>
    <property type="match status" value="1"/>
</dbReference>
<dbReference type="SUPFAM" id="SSF50242">
    <property type="entry name" value="TIMP-like"/>
    <property type="match status" value="1"/>
</dbReference>
<dbReference type="PROSITE" id="PS00477">
    <property type="entry name" value="ALPHA_2_MACROGLOBULIN"/>
    <property type="match status" value="1"/>
</dbReference>
<dbReference type="PROSITE" id="PS01178">
    <property type="entry name" value="ANAPHYLATOXIN_2"/>
    <property type="match status" value="1"/>
</dbReference>
<dbReference type="PROSITE" id="PS50189">
    <property type="entry name" value="NTR"/>
    <property type="match status" value="1"/>
</dbReference>
<sequence>MEGMALYLVAALLIGFPGSSHGALYTLITPGVLRTDTEEQILVEAHGDNTPKQLDIFVHDFPRKQKILFQKRVDMNPAGDMLVTPTIKIPAEEVSKDSRQNQYVVVQVTGPQVRLEKVVLLSYQSGFVFIQTDKGIYTPGSPVLYRVFSMDHNMRQMDKTVVVEFQTPEGIVVSSNRIDLNFTRPYNLPELGSLGTWKIVAKYEHSPENYTAYFDVRKYVLPSFEVHLQPSEKSFYIDGNENFHVSITARYLYGEEVEGVAFVLFGVKIDGAKKSIPDSLTRIPILDGDGEATLKRDTLRSRFPNLNELVGHTLYASVTVITESGSDMVATEQSGIHIVTSPYQIYFTKTPKYFKPGMPYELTVYVTNPDGSPAAKVPVVSEAIHSEGTTLSDGTAKLILNTPLDTQSLLITVRTNHGDLPRERQATKSMTATAYQTQGGSGNYLHVAITSTEIKPGDNLPVNFNVRGNANSLNQVKYFTYLVGRQPKGAGQNLVAMNLRITPDLIPSFRFVAYYQVGNNEIVADSVWVDVKDTCMGTLVVKGASLTDNQIHMPGAAMKIKLEGDPGAQVGLVAVDKAVYVLNDKYKISQAKIWDTIEKSDFGCTAGGGQNNLGVFEDAGLALTTSTNLNTKQRSDTKCPQPANRRRRSSVLLLDSKASKAAQFQDQDLRKCCEDSMHENPMGYTCEKRAKYIQEGDACKAAFLECCRYIKGILDENQWESGLFLPRNDNEDGFIQDSDIIPRTDFPKSWLWHTVQLTEQPNSNGISSKTMSIYLKESITTWEVLAVSFTPTKGICVAEPYEIKVMKDFFIDLRVPYSVVRKEQVEIRAVLYNYAGRDIYVRVELLYNPAFCSASTEEQRYRQQFTIKALSSRAVPFVIVPLQQGLHDIEVRASVQGWESVSDGVKKKLKVVPEGVQKCIVTIIKLDPRAKGVDGTQREVVKARKLDDKVPDTEIETKITIQADPVAQIIENSIDGSKLNHLIITPSGCGEQNMIRMTAPVIATYYLDTTEQWETLGRNHRNEAVKQIMTGYAQQMVYKKANHSYAAFTNRASSTWLTAYVVKVFAMATKMVAGISHEIICGGVRWLILNRQQPDGAFKENAPVLSGTMQGGIQGDESEVTVTAFTLVALLESKTICNDSVNSLDSSIKKATDYLLKKYEKLQRPYTTALTAYALAAADRLNDDRVLMAASTGKNRWEEYNAHTHNVEGTSYALLALLKMKKFDQTGPIVRWLTDQNFYGGTYGQTQATVMLFQALAEYKIQMPTHKDLNLDIIIKLPERELPLHYRLDATNAILARTAETKLNQDFTVSASGDGTATMTILTVYNAQLQEKANVCNKFHLDVSVENIHLNFKHAKGAKGALMLKICMRYLGEVDSTMTIIDISMLTGFLPDAEDLTRLSEGVDRYISRYEVDNNMAQKVAVIIYLDKVSHSEDECLQFKILKHFEVGFIQPGSVKVYSYYNLDEQCTKFYHPDKGTGLLNKICVGNICRCAAETCSLLSQQEKIDLPLRIQKACASNVDYVYKTKLLRIEEKDGYDIYVMDVLEVIKPGTDENPQANARQYISQRKCQEALNLNVNDDYLIWGLRSDLWPMKDKFSYLITKNTWIERWPHEDECQDEEFQNLCLDFAHLSNILTIFGCPT</sequence>